<dbReference type="EC" id="3.1.-.-" evidence="1"/>
<dbReference type="EC" id="3.6.4.-" evidence="1"/>
<dbReference type="EMBL" id="CP000969">
    <property type="protein sequence ID" value="ACB09877.1"/>
    <property type="molecule type" value="Genomic_DNA"/>
</dbReference>
<dbReference type="RefSeq" id="WP_012311177.1">
    <property type="nucleotide sequence ID" value="NC_010483.1"/>
</dbReference>
<dbReference type="SMR" id="B1LC69"/>
<dbReference type="KEGG" id="trq:TRQ2_1541"/>
<dbReference type="HOGENOM" id="CLU_011252_2_1_0"/>
<dbReference type="Proteomes" id="UP000001687">
    <property type="component" value="Chromosome"/>
</dbReference>
<dbReference type="GO" id="GO:0005524">
    <property type="term" value="F:ATP binding"/>
    <property type="evidence" value="ECO:0007669"/>
    <property type="project" value="UniProtKB-UniRule"/>
</dbReference>
<dbReference type="GO" id="GO:0016887">
    <property type="term" value="F:ATP hydrolysis activity"/>
    <property type="evidence" value="ECO:0007669"/>
    <property type="project" value="InterPro"/>
</dbReference>
<dbReference type="GO" id="GO:0140664">
    <property type="term" value="F:ATP-dependent DNA damage sensor activity"/>
    <property type="evidence" value="ECO:0007669"/>
    <property type="project" value="InterPro"/>
</dbReference>
<dbReference type="GO" id="GO:0004519">
    <property type="term" value="F:endonuclease activity"/>
    <property type="evidence" value="ECO:0007669"/>
    <property type="project" value="UniProtKB-UniRule"/>
</dbReference>
<dbReference type="GO" id="GO:0030983">
    <property type="term" value="F:mismatched DNA binding"/>
    <property type="evidence" value="ECO:0007669"/>
    <property type="project" value="InterPro"/>
</dbReference>
<dbReference type="GO" id="GO:0043023">
    <property type="term" value="F:ribosomal large subunit binding"/>
    <property type="evidence" value="ECO:0007669"/>
    <property type="project" value="UniProtKB-UniRule"/>
</dbReference>
<dbReference type="GO" id="GO:0019843">
    <property type="term" value="F:rRNA binding"/>
    <property type="evidence" value="ECO:0007669"/>
    <property type="project" value="UniProtKB-UniRule"/>
</dbReference>
<dbReference type="GO" id="GO:0006298">
    <property type="term" value="P:mismatch repair"/>
    <property type="evidence" value="ECO:0007669"/>
    <property type="project" value="InterPro"/>
</dbReference>
<dbReference type="GO" id="GO:0045910">
    <property type="term" value="P:negative regulation of DNA recombination"/>
    <property type="evidence" value="ECO:0007669"/>
    <property type="project" value="InterPro"/>
</dbReference>
<dbReference type="GO" id="GO:0072344">
    <property type="term" value="P:rescue of stalled ribosome"/>
    <property type="evidence" value="ECO:0007669"/>
    <property type="project" value="UniProtKB-UniRule"/>
</dbReference>
<dbReference type="CDD" id="cd03280">
    <property type="entry name" value="ABC_MutS2"/>
    <property type="match status" value="1"/>
</dbReference>
<dbReference type="FunFam" id="3.40.50.300:FF:000830">
    <property type="entry name" value="Endonuclease MutS2"/>
    <property type="match status" value="1"/>
</dbReference>
<dbReference type="Gene3D" id="3.30.1370.110">
    <property type="match status" value="1"/>
</dbReference>
<dbReference type="Gene3D" id="3.40.50.300">
    <property type="entry name" value="P-loop containing nucleotide triphosphate hydrolases"/>
    <property type="match status" value="1"/>
</dbReference>
<dbReference type="HAMAP" id="MF_00092">
    <property type="entry name" value="MutS2"/>
    <property type="match status" value="1"/>
</dbReference>
<dbReference type="InterPro" id="IPR000432">
    <property type="entry name" value="DNA_mismatch_repair_MutS_C"/>
</dbReference>
<dbReference type="InterPro" id="IPR007696">
    <property type="entry name" value="DNA_mismatch_repair_MutS_core"/>
</dbReference>
<dbReference type="InterPro" id="IPR036187">
    <property type="entry name" value="DNA_mismatch_repair_MutS_sf"/>
</dbReference>
<dbReference type="InterPro" id="IPR046893">
    <property type="entry name" value="MSSS"/>
</dbReference>
<dbReference type="InterPro" id="IPR045076">
    <property type="entry name" value="MutS"/>
</dbReference>
<dbReference type="InterPro" id="IPR005747">
    <property type="entry name" value="MutS2"/>
</dbReference>
<dbReference type="InterPro" id="IPR027417">
    <property type="entry name" value="P-loop_NTPase"/>
</dbReference>
<dbReference type="InterPro" id="IPR002625">
    <property type="entry name" value="Smr_dom"/>
</dbReference>
<dbReference type="InterPro" id="IPR036063">
    <property type="entry name" value="Smr_dom_sf"/>
</dbReference>
<dbReference type="NCBIfam" id="TIGR01069">
    <property type="entry name" value="mutS2"/>
    <property type="match status" value="1"/>
</dbReference>
<dbReference type="PANTHER" id="PTHR48466">
    <property type="entry name" value="OS10G0509000 PROTEIN-RELATED"/>
    <property type="match status" value="1"/>
</dbReference>
<dbReference type="PANTHER" id="PTHR48466:SF1">
    <property type="entry name" value="SMR DOMAIN-CONTAINING PROTEIN"/>
    <property type="match status" value="1"/>
</dbReference>
<dbReference type="Pfam" id="PF20297">
    <property type="entry name" value="MSSS"/>
    <property type="match status" value="1"/>
</dbReference>
<dbReference type="Pfam" id="PF00488">
    <property type="entry name" value="MutS_V"/>
    <property type="match status" value="1"/>
</dbReference>
<dbReference type="Pfam" id="PF01713">
    <property type="entry name" value="Smr"/>
    <property type="match status" value="1"/>
</dbReference>
<dbReference type="PIRSF" id="PIRSF005814">
    <property type="entry name" value="MutS_YshD"/>
    <property type="match status" value="1"/>
</dbReference>
<dbReference type="SMART" id="SM00534">
    <property type="entry name" value="MUTSac"/>
    <property type="match status" value="1"/>
</dbReference>
<dbReference type="SMART" id="SM00533">
    <property type="entry name" value="MUTSd"/>
    <property type="match status" value="1"/>
</dbReference>
<dbReference type="SMART" id="SM00463">
    <property type="entry name" value="SMR"/>
    <property type="match status" value="1"/>
</dbReference>
<dbReference type="SUPFAM" id="SSF48334">
    <property type="entry name" value="DNA repair protein MutS, domain III"/>
    <property type="match status" value="1"/>
</dbReference>
<dbReference type="SUPFAM" id="SSF52540">
    <property type="entry name" value="P-loop containing nucleoside triphosphate hydrolases"/>
    <property type="match status" value="1"/>
</dbReference>
<dbReference type="SUPFAM" id="SSF160443">
    <property type="entry name" value="SMR domain-like"/>
    <property type="match status" value="1"/>
</dbReference>
<dbReference type="PROSITE" id="PS00486">
    <property type="entry name" value="DNA_MISMATCH_REPAIR_2"/>
    <property type="match status" value="1"/>
</dbReference>
<dbReference type="PROSITE" id="PS50828">
    <property type="entry name" value="SMR"/>
    <property type="match status" value="1"/>
</dbReference>
<reference key="1">
    <citation type="journal article" date="2011" name="J. Bacteriol.">
        <title>Genome sequence of Thermotoga sp. strain RQ2, a hyperthermophilic bacterium isolated from a geothermally heated region of the seafloor near Ribeira Quente, the Azores.</title>
        <authorList>
            <person name="Swithers K.S."/>
            <person name="DiPippo J.L."/>
            <person name="Bruce D.C."/>
            <person name="Detter C."/>
            <person name="Tapia R."/>
            <person name="Han S."/>
            <person name="Saunders E."/>
            <person name="Goodwin L.A."/>
            <person name="Han J."/>
            <person name="Woyke T."/>
            <person name="Pitluck S."/>
            <person name="Pennacchio L."/>
            <person name="Nolan M."/>
            <person name="Mikhailova N."/>
            <person name="Lykidis A."/>
            <person name="Land M.L."/>
            <person name="Brettin T."/>
            <person name="Stetter K.O."/>
            <person name="Nelson K.E."/>
            <person name="Gogarten J.P."/>
            <person name="Noll K.M."/>
        </authorList>
    </citation>
    <scope>NUCLEOTIDE SEQUENCE [LARGE SCALE GENOMIC DNA]</scope>
    <source>
        <strain>RQ2</strain>
    </source>
</reference>
<evidence type="ECO:0000255" key="1">
    <source>
        <dbReference type="HAMAP-Rule" id="MF_00092"/>
    </source>
</evidence>
<accession>B1LC69</accession>
<protein>
    <recommendedName>
        <fullName evidence="1">Endonuclease MutS2</fullName>
        <ecNumber evidence="1">3.1.-.-</ecNumber>
    </recommendedName>
    <alternativeName>
        <fullName evidence="1">Ribosome-associated protein quality control-upstream factor</fullName>
        <shortName evidence="1">RQC-upstream factor</shortName>
        <shortName evidence="1">RqcU</shortName>
        <ecNumber evidence="1">3.6.4.-</ecNumber>
    </alternativeName>
</protein>
<organism>
    <name type="scientific">Thermotoga sp. (strain RQ2)</name>
    <dbReference type="NCBI Taxonomy" id="126740"/>
    <lineage>
        <taxon>Bacteria</taxon>
        <taxon>Thermotogati</taxon>
        <taxon>Thermotogota</taxon>
        <taxon>Thermotogae</taxon>
        <taxon>Thermotogales</taxon>
        <taxon>Thermotogaceae</taxon>
        <taxon>Thermotoga</taxon>
    </lineage>
</organism>
<sequence length="757" mass="86434">MDYLESLDFPKVVEIVKKYALSDLGRKHLDTLKPTVNPWDELELVEELLNYFARWGEPPIKGLNDISQEVERVKSGSALEPWELLRVSVFLEGCDILKKDFEKREYSRLKETFSRLSSFRDFVEEVNRCIEQDGEISDRASPRLREIRTEKKRLASEIKRKADDFVRTHSQILQEQMYVYRDGRYLFPVKASMRNAVRGIVHHLSSSGATVFLEPDEFVELNNRVRLLEEEERLEISRILRQLTNILLSRLNDLERNVELIARFDSLYARVKFAREFNGTVVKPSSRIRLVNARHPLIPKERVVPINLELPPNKRGFIITGPNMGGKTVTVKTVGLFTALMMSGFPLPCDEGTELKVFPKIMADIGEEQSIEQSLSTFSSHMKKIVEIVKNADSDSLVILDELGSGTDPVEGAALAVAIIEDLLEKGATIFVTTHLTPVKVFAMNHPLLLNASMEFDPETLSPTYRVLVGVPGGSHAFQIAEKLGLDKRIIENARSRLSREEMELEGLIRSLHEKISLLEEEKRKLQKEREEYMKLREKYEEDYKKLRRMKIEEFDKELRELNDYIRKVKKELDQAIHVAKTGSVDEMREAVKTIEKEKKDLEQKRIEEATEEEIKPGDHVKMEGGTSVGKVVEVKSGTALVDFGFLRLKVPVSKLKKAKKEEKEESSAVSYRPSSFRTEIDIRGMTVEEAEPVVKKFIDDLMMNGISKGYIIHGKGTGKLASGVWEILRKDKRVVSFRFGTPSEGGTGVTVVEVKV</sequence>
<gene>
    <name evidence="1" type="primary">mutS2</name>
    <name evidence="1" type="synonym">rqcU</name>
    <name type="ordered locus">TRQ2_1541</name>
</gene>
<feature type="chain" id="PRO_1000093410" description="Endonuclease MutS2">
    <location>
        <begin position="1"/>
        <end position="757"/>
    </location>
</feature>
<feature type="domain" description="Smr" evidence="1">
    <location>
        <begin position="681"/>
        <end position="756"/>
    </location>
</feature>
<feature type="binding site" evidence="1">
    <location>
        <begin position="321"/>
        <end position="328"/>
    </location>
    <ligand>
        <name>ATP</name>
        <dbReference type="ChEBI" id="CHEBI:30616"/>
    </ligand>
</feature>
<name>MUTS2_THESQ</name>
<comment type="function">
    <text evidence="1">Endonuclease that is involved in the suppression of homologous recombination and thus may have a key role in the control of bacterial genetic diversity.</text>
</comment>
<comment type="function">
    <text evidence="1">Acts as a ribosome collision sensor, splitting the ribosome into its 2 subunits. Detects stalled/collided 70S ribosomes which it binds and splits by an ATP-hydrolysis driven conformational change. Acts upstream of the ribosome quality control system (RQC), a ribosome-associated complex that mediates the extraction of incompletely synthesized nascent chains from stalled ribosomes and their subsequent degradation. Probably generates substrates for RQC.</text>
</comment>
<comment type="subunit">
    <text evidence="1">Homodimer. Binds to stalled ribosomes, contacting rRNA.</text>
</comment>
<comment type="similarity">
    <text evidence="1">Belongs to the DNA mismatch repair MutS family. MutS2 subfamily.</text>
</comment>
<keyword id="KW-0067">ATP-binding</keyword>
<keyword id="KW-0238">DNA-binding</keyword>
<keyword id="KW-0255">Endonuclease</keyword>
<keyword id="KW-0378">Hydrolase</keyword>
<keyword id="KW-0540">Nuclease</keyword>
<keyword id="KW-0547">Nucleotide-binding</keyword>
<keyword id="KW-0694">RNA-binding</keyword>
<keyword id="KW-0699">rRNA-binding</keyword>
<proteinExistence type="inferred from homology"/>